<reference key="1">
    <citation type="journal article" date="2005" name="Genome Res.">
        <title>Coping with cold: the genome of the versatile marine Antarctica bacterium Pseudoalteromonas haloplanktis TAC125.</title>
        <authorList>
            <person name="Medigue C."/>
            <person name="Krin E."/>
            <person name="Pascal G."/>
            <person name="Barbe V."/>
            <person name="Bernsel A."/>
            <person name="Bertin P.N."/>
            <person name="Cheung F."/>
            <person name="Cruveiller S."/>
            <person name="D'Amico S."/>
            <person name="Duilio A."/>
            <person name="Fang G."/>
            <person name="Feller G."/>
            <person name="Ho C."/>
            <person name="Mangenot S."/>
            <person name="Marino G."/>
            <person name="Nilsson J."/>
            <person name="Parrilli E."/>
            <person name="Rocha E.P.C."/>
            <person name="Rouy Z."/>
            <person name="Sekowska A."/>
            <person name="Tutino M.L."/>
            <person name="Vallenet D."/>
            <person name="von Heijne G."/>
            <person name="Danchin A."/>
        </authorList>
    </citation>
    <scope>NUCLEOTIDE SEQUENCE [LARGE SCALE GENOMIC DNA]</scope>
    <source>
        <strain>TAC 125</strain>
    </source>
</reference>
<organism>
    <name type="scientific">Pseudoalteromonas translucida (strain TAC 125)</name>
    <dbReference type="NCBI Taxonomy" id="326442"/>
    <lineage>
        <taxon>Bacteria</taxon>
        <taxon>Pseudomonadati</taxon>
        <taxon>Pseudomonadota</taxon>
        <taxon>Gammaproteobacteria</taxon>
        <taxon>Alteromonadales</taxon>
        <taxon>Pseudoalteromonadaceae</taxon>
        <taxon>Pseudoalteromonas</taxon>
    </lineage>
</organism>
<evidence type="ECO:0000255" key="1">
    <source>
        <dbReference type="HAMAP-Rule" id="MF_00073"/>
    </source>
</evidence>
<protein>
    <recommendedName>
        <fullName evidence="1">Transcription antitermination protein NusB</fullName>
    </recommendedName>
    <alternativeName>
        <fullName evidence="1">Antitermination factor NusB</fullName>
    </alternativeName>
</protein>
<accession>Q3II29</accession>
<name>NUSB_PSET1</name>
<keyword id="KW-1185">Reference proteome</keyword>
<keyword id="KW-0694">RNA-binding</keyword>
<keyword id="KW-0804">Transcription</keyword>
<keyword id="KW-0889">Transcription antitermination</keyword>
<keyword id="KW-0805">Transcription regulation</keyword>
<feature type="chain" id="PRO_0000265562" description="Transcription antitermination protein NusB">
    <location>
        <begin position="1"/>
        <end position="136"/>
    </location>
</feature>
<comment type="function">
    <text evidence="1">Involved in transcription antitermination. Required for transcription of ribosomal RNA (rRNA) genes. Binds specifically to the boxA antiterminator sequence of the ribosomal RNA (rrn) operons.</text>
</comment>
<comment type="similarity">
    <text evidence="1">Belongs to the NusB family.</text>
</comment>
<gene>
    <name evidence="1" type="primary">nusB</name>
    <name type="ordered locus">PSHAa2370</name>
</gene>
<proteinExistence type="inferred from homology"/>
<dbReference type="EMBL" id="CR954246">
    <property type="protein sequence ID" value="CAI87419.1"/>
    <property type="molecule type" value="Genomic_DNA"/>
</dbReference>
<dbReference type="SMR" id="Q3II29"/>
<dbReference type="STRING" id="326442.PSHAa2370"/>
<dbReference type="KEGG" id="pha:PSHAa2370"/>
<dbReference type="eggNOG" id="COG0781">
    <property type="taxonomic scope" value="Bacteria"/>
</dbReference>
<dbReference type="HOGENOM" id="CLU_087843_4_1_6"/>
<dbReference type="BioCyc" id="PHAL326442:PSHA_RS11675-MONOMER"/>
<dbReference type="Proteomes" id="UP000006843">
    <property type="component" value="Chromosome I"/>
</dbReference>
<dbReference type="GO" id="GO:0005829">
    <property type="term" value="C:cytosol"/>
    <property type="evidence" value="ECO:0007669"/>
    <property type="project" value="TreeGrafter"/>
</dbReference>
<dbReference type="GO" id="GO:0003723">
    <property type="term" value="F:RNA binding"/>
    <property type="evidence" value="ECO:0007669"/>
    <property type="project" value="UniProtKB-UniRule"/>
</dbReference>
<dbReference type="GO" id="GO:0006353">
    <property type="term" value="P:DNA-templated transcription termination"/>
    <property type="evidence" value="ECO:0007669"/>
    <property type="project" value="UniProtKB-UniRule"/>
</dbReference>
<dbReference type="GO" id="GO:0031564">
    <property type="term" value="P:transcription antitermination"/>
    <property type="evidence" value="ECO:0007669"/>
    <property type="project" value="UniProtKB-KW"/>
</dbReference>
<dbReference type="CDD" id="cd00619">
    <property type="entry name" value="Terminator_NusB"/>
    <property type="match status" value="1"/>
</dbReference>
<dbReference type="FunFam" id="1.10.940.10:FF:000001">
    <property type="entry name" value="Transcription antitermination factor NusB"/>
    <property type="match status" value="1"/>
</dbReference>
<dbReference type="Gene3D" id="1.10.940.10">
    <property type="entry name" value="NusB-like"/>
    <property type="match status" value="1"/>
</dbReference>
<dbReference type="HAMAP" id="MF_00073">
    <property type="entry name" value="NusB"/>
    <property type="match status" value="1"/>
</dbReference>
<dbReference type="InterPro" id="IPR035926">
    <property type="entry name" value="NusB-like_sf"/>
</dbReference>
<dbReference type="InterPro" id="IPR011605">
    <property type="entry name" value="NusB_fam"/>
</dbReference>
<dbReference type="InterPro" id="IPR006027">
    <property type="entry name" value="NusB_RsmB_TIM44"/>
</dbReference>
<dbReference type="NCBIfam" id="TIGR01951">
    <property type="entry name" value="nusB"/>
    <property type="match status" value="1"/>
</dbReference>
<dbReference type="PANTHER" id="PTHR11078:SF3">
    <property type="entry name" value="ANTITERMINATION NUSB DOMAIN-CONTAINING PROTEIN"/>
    <property type="match status" value="1"/>
</dbReference>
<dbReference type="PANTHER" id="PTHR11078">
    <property type="entry name" value="N UTILIZATION SUBSTANCE PROTEIN B-RELATED"/>
    <property type="match status" value="1"/>
</dbReference>
<dbReference type="Pfam" id="PF01029">
    <property type="entry name" value="NusB"/>
    <property type="match status" value="1"/>
</dbReference>
<dbReference type="SUPFAM" id="SSF48013">
    <property type="entry name" value="NusB-like"/>
    <property type="match status" value="1"/>
</dbReference>
<sequence length="136" mass="15537">MKPAARRKARILALQAIYSWQLSGNAIADIEQQMLIENDVTKIDVEYFKDLASGVAVNYKQLDEAVSPHLTRPFDELDMVERAILRLSSYELKFREDVPYKVAINESIELAKMFGAEDSHKFVNGVLDKAVKHLRK</sequence>